<proteinExistence type="inferred from homology"/>
<sequence length="210" mass="24462">MADFLARDYRSQGEAAHEMLPTFLIGKILRERIVDSIYWKEQCFGLNACSLVDRAVRLEYIGGQYGNQRPTEFICLLYKLLQIAPEKEIIQQYLSIPEFKYLRALAAFYVRLTWDDVEVHQTLEPLLRDYRKLRIRTNSEIRLTYLDEVVDDLLNAEVVCDISLPPLRSRLQLEDLDLLEPLSSSSDEEDDDEEQISKLESNEGAVDRNI</sequence>
<accession>Q9UUD2</accession>
<evidence type="ECO:0000250" key="1">
    <source>
        <dbReference type="UniProtKB" id="Q00723"/>
    </source>
</evidence>
<evidence type="ECO:0000255" key="2"/>
<evidence type="ECO:0000256" key="3">
    <source>
        <dbReference type="SAM" id="MobiDB-lite"/>
    </source>
</evidence>
<evidence type="ECO:0000269" key="4">
    <source>
    </source>
</evidence>
<evidence type="ECO:0000305" key="5"/>
<evidence type="ECO:0000312" key="6">
    <source>
        <dbReference type="EMBL" id="CAB52035.1"/>
    </source>
</evidence>
<dbReference type="EMBL" id="CU329671">
    <property type="protein sequence ID" value="CAB52035.1"/>
    <property type="molecule type" value="Genomic_DNA"/>
</dbReference>
<dbReference type="PIR" id="T39799">
    <property type="entry name" value="T39799"/>
</dbReference>
<dbReference type="RefSeq" id="NP_595693.1">
    <property type="nucleotide sequence ID" value="NM_001021590.2"/>
</dbReference>
<dbReference type="SMR" id="Q9UUD2"/>
<dbReference type="BioGRID" id="276981">
    <property type="interactions" value="7"/>
</dbReference>
<dbReference type="FunCoup" id="Q9UUD2">
    <property type="interactions" value="586"/>
</dbReference>
<dbReference type="IntAct" id="Q9UUD2">
    <property type="interactions" value="2"/>
</dbReference>
<dbReference type="STRING" id="284812.Q9UUD2"/>
<dbReference type="PaxDb" id="4896-SPBC19C2.08.1"/>
<dbReference type="EnsemblFungi" id="SPBC19C2.08.1">
    <property type="protein sequence ID" value="SPBC19C2.08.1:pep"/>
    <property type="gene ID" value="SPBC19C2.08"/>
</dbReference>
<dbReference type="GeneID" id="2540453"/>
<dbReference type="KEGG" id="spo:2540453"/>
<dbReference type="PomBase" id="SPBC19C2.08">
    <property type="gene designation" value="prp38"/>
</dbReference>
<dbReference type="VEuPathDB" id="FungiDB:SPBC19C2.08"/>
<dbReference type="eggNOG" id="KOG2889">
    <property type="taxonomic scope" value="Eukaryota"/>
</dbReference>
<dbReference type="HOGENOM" id="CLU_039466_2_1_1"/>
<dbReference type="InParanoid" id="Q9UUD2"/>
<dbReference type="OMA" id="GEHFKYL"/>
<dbReference type="PhylomeDB" id="Q9UUD2"/>
<dbReference type="PRO" id="PR:Q9UUD2"/>
<dbReference type="Proteomes" id="UP000002485">
    <property type="component" value="Chromosome II"/>
</dbReference>
<dbReference type="GO" id="GO:0005829">
    <property type="term" value="C:cytosol"/>
    <property type="evidence" value="ECO:0007005"/>
    <property type="project" value="PomBase"/>
</dbReference>
<dbReference type="GO" id="GO:0005634">
    <property type="term" value="C:nucleus"/>
    <property type="evidence" value="ECO:0007005"/>
    <property type="project" value="PomBase"/>
</dbReference>
<dbReference type="GO" id="GO:0071011">
    <property type="term" value="C:precatalytic spliceosome"/>
    <property type="evidence" value="ECO:0000318"/>
    <property type="project" value="GO_Central"/>
</dbReference>
<dbReference type="GO" id="GO:0046540">
    <property type="term" value="C:U4/U6 x U5 tri-snRNP complex"/>
    <property type="evidence" value="ECO:0000314"/>
    <property type="project" value="PomBase"/>
</dbReference>
<dbReference type="GO" id="GO:0045292">
    <property type="term" value="P:mRNA cis splicing, via spliceosome"/>
    <property type="evidence" value="ECO:0000269"/>
    <property type="project" value="PomBase"/>
</dbReference>
<dbReference type="InterPro" id="IPR005037">
    <property type="entry name" value="PRP38"/>
</dbReference>
<dbReference type="PANTHER" id="PTHR23142">
    <property type="entry name" value="PRE-MRNA-SPLICING FACTOR 38A-RELATED"/>
    <property type="match status" value="1"/>
</dbReference>
<dbReference type="Pfam" id="PF03371">
    <property type="entry name" value="PRP38"/>
    <property type="match status" value="1"/>
</dbReference>
<feature type="chain" id="PRO_0000328925" description="Pre-mRNA-splicing factor 38">
    <location>
        <begin position="1"/>
        <end position="210"/>
    </location>
</feature>
<feature type="region of interest" description="Disordered" evidence="3">
    <location>
        <begin position="181"/>
        <end position="210"/>
    </location>
</feature>
<feature type="compositionally biased region" description="Basic and acidic residues" evidence="3">
    <location>
        <begin position="195"/>
        <end position="210"/>
    </location>
</feature>
<organism>
    <name type="scientific">Schizosaccharomyces pombe (strain 972 / ATCC 24843)</name>
    <name type="common">Fission yeast</name>
    <dbReference type="NCBI Taxonomy" id="284812"/>
    <lineage>
        <taxon>Eukaryota</taxon>
        <taxon>Fungi</taxon>
        <taxon>Dikarya</taxon>
        <taxon>Ascomycota</taxon>
        <taxon>Taphrinomycotina</taxon>
        <taxon>Schizosaccharomycetes</taxon>
        <taxon>Schizosaccharomycetales</taxon>
        <taxon>Schizosaccharomycetaceae</taxon>
        <taxon>Schizosaccharomyces</taxon>
    </lineage>
</organism>
<name>PRP38_SCHPO</name>
<comment type="function">
    <text evidence="1">Required for pre-mRNA splicing and maintenance of stable U6 small nuclear RNA levels. Implicated in the formation of stable and biologically active snRNP structures. As part of the U4/U6.U5 tri-snRNP particle, dispensible for spliceosome assembly, but required for conformational changes, which result in U4 snRNA release and the subsequent catalytic activation of the spliceosome (By similarity).</text>
</comment>
<comment type="subunit">
    <text evidence="1">Component of the 25S U4/U6.U5 tri-snRNP particle, a subcomplex of the spliceosome.</text>
</comment>
<comment type="subcellular location">
    <subcellularLocation>
        <location evidence="4">Nucleus</location>
    </subcellularLocation>
</comment>
<comment type="similarity">
    <text evidence="2">Belongs to the PRP38 family.</text>
</comment>
<gene>
    <name evidence="6" type="primary">prp38</name>
    <name type="ORF">SPBC19C2.08</name>
</gene>
<protein>
    <recommendedName>
        <fullName>Pre-mRNA-splicing factor 38</fullName>
    </recommendedName>
</protein>
<keyword id="KW-0507">mRNA processing</keyword>
<keyword id="KW-0508">mRNA splicing</keyword>
<keyword id="KW-0539">Nucleus</keyword>
<keyword id="KW-1185">Reference proteome</keyword>
<keyword id="KW-0687">Ribonucleoprotein</keyword>
<keyword id="KW-0747">Spliceosome</keyword>
<reference evidence="6" key="1">
    <citation type="journal article" date="2002" name="Nature">
        <title>The genome sequence of Schizosaccharomyces pombe.</title>
        <authorList>
            <person name="Wood V."/>
            <person name="Gwilliam R."/>
            <person name="Rajandream M.A."/>
            <person name="Lyne M.H."/>
            <person name="Lyne R."/>
            <person name="Stewart A."/>
            <person name="Sgouros J.G."/>
            <person name="Peat N."/>
            <person name="Hayles J."/>
            <person name="Baker S.G."/>
            <person name="Basham D."/>
            <person name="Bowman S."/>
            <person name="Brooks K."/>
            <person name="Brown D."/>
            <person name="Brown S."/>
            <person name="Chillingworth T."/>
            <person name="Churcher C.M."/>
            <person name="Collins M."/>
            <person name="Connor R."/>
            <person name="Cronin A."/>
            <person name="Davis P."/>
            <person name="Feltwell T."/>
            <person name="Fraser A."/>
            <person name="Gentles S."/>
            <person name="Goble A."/>
            <person name="Hamlin N."/>
            <person name="Harris D.E."/>
            <person name="Hidalgo J."/>
            <person name="Hodgson G."/>
            <person name="Holroyd S."/>
            <person name="Hornsby T."/>
            <person name="Howarth S."/>
            <person name="Huckle E.J."/>
            <person name="Hunt S."/>
            <person name="Jagels K."/>
            <person name="James K.D."/>
            <person name="Jones L."/>
            <person name="Jones M."/>
            <person name="Leather S."/>
            <person name="McDonald S."/>
            <person name="McLean J."/>
            <person name="Mooney P."/>
            <person name="Moule S."/>
            <person name="Mungall K.L."/>
            <person name="Murphy L.D."/>
            <person name="Niblett D."/>
            <person name="Odell C."/>
            <person name="Oliver K."/>
            <person name="O'Neil S."/>
            <person name="Pearson D."/>
            <person name="Quail M.A."/>
            <person name="Rabbinowitsch E."/>
            <person name="Rutherford K.M."/>
            <person name="Rutter S."/>
            <person name="Saunders D."/>
            <person name="Seeger K."/>
            <person name="Sharp S."/>
            <person name="Skelton J."/>
            <person name="Simmonds M.N."/>
            <person name="Squares R."/>
            <person name="Squares S."/>
            <person name="Stevens K."/>
            <person name="Taylor K."/>
            <person name="Taylor R.G."/>
            <person name="Tivey A."/>
            <person name="Walsh S.V."/>
            <person name="Warren T."/>
            <person name="Whitehead S."/>
            <person name="Woodward J.R."/>
            <person name="Volckaert G."/>
            <person name="Aert R."/>
            <person name="Robben J."/>
            <person name="Grymonprez B."/>
            <person name="Weltjens I."/>
            <person name="Vanstreels E."/>
            <person name="Rieger M."/>
            <person name="Schaefer M."/>
            <person name="Mueller-Auer S."/>
            <person name="Gabel C."/>
            <person name="Fuchs M."/>
            <person name="Duesterhoeft A."/>
            <person name="Fritzc C."/>
            <person name="Holzer E."/>
            <person name="Moestl D."/>
            <person name="Hilbert H."/>
            <person name="Borzym K."/>
            <person name="Langer I."/>
            <person name="Beck A."/>
            <person name="Lehrach H."/>
            <person name="Reinhardt R."/>
            <person name="Pohl T.M."/>
            <person name="Eger P."/>
            <person name="Zimmermann W."/>
            <person name="Wedler H."/>
            <person name="Wambutt R."/>
            <person name="Purnelle B."/>
            <person name="Goffeau A."/>
            <person name="Cadieu E."/>
            <person name="Dreano S."/>
            <person name="Gloux S."/>
            <person name="Lelaure V."/>
            <person name="Mottier S."/>
            <person name="Galibert F."/>
            <person name="Aves S.J."/>
            <person name="Xiang Z."/>
            <person name="Hunt C."/>
            <person name="Moore K."/>
            <person name="Hurst S.M."/>
            <person name="Lucas M."/>
            <person name="Rochet M."/>
            <person name="Gaillardin C."/>
            <person name="Tallada V.A."/>
            <person name="Garzon A."/>
            <person name="Thode G."/>
            <person name="Daga R.R."/>
            <person name="Cruzado L."/>
            <person name="Jimenez J."/>
            <person name="Sanchez M."/>
            <person name="del Rey F."/>
            <person name="Benito J."/>
            <person name="Dominguez A."/>
            <person name="Revuelta J.L."/>
            <person name="Moreno S."/>
            <person name="Armstrong J."/>
            <person name="Forsburg S.L."/>
            <person name="Cerutti L."/>
            <person name="Lowe T."/>
            <person name="McCombie W.R."/>
            <person name="Paulsen I."/>
            <person name="Potashkin J."/>
            <person name="Shpakovski G.V."/>
            <person name="Ussery D."/>
            <person name="Barrell B.G."/>
            <person name="Nurse P."/>
        </authorList>
    </citation>
    <scope>NUCLEOTIDE SEQUENCE [LARGE SCALE GENOMIC DNA]</scope>
    <source>
        <strain>972 / ATCC 24843</strain>
    </source>
</reference>
<reference evidence="5" key="2">
    <citation type="journal article" date="2006" name="Nat. Biotechnol.">
        <title>ORFeome cloning and global analysis of protein localization in the fission yeast Schizosaccharomyces pombe.</title>
        <authorList>
            <person name="Matsuyama A."/>
            <person name="Arai R."/>
            <person name="Yashiroda Y."/>
            <person name="Shirai A."/>
            <person name="Kamata A."/>
            <person name="Sekido S."/>
            <person name="Kobayashi Y."/>
            <person name="Hashimoto A."/>
            <person name="Hamamoto M."/>
            <person name="Hiraoka Y."/>
            <person name="Horinouchi S."/>
            <person name="Yoshida M."/>
        </authorList>
    </citation>
    <scope>SUBCELLULAR LOCATION [LARGE SCALE ANALYSIS]</scope>
</reference>